<accession>Q8ZQ52</accession>
<gene>
    <name type="primary">hiuH</name>
    <name type="ordered locus">STM1097</name>
</gene>
<sequence>MKRYILATVIASLVAAPAMALAAGNNILSVHILDQQTGKPAPGVEVVLEQKKDNGWTQLNTGHTDQDGRIKALWPEKAAAPGDYRVIFKTGQYFESKKLDTFFPEIPVEFHISKTNEHYHVPLLLSQYGYSTYRGS</sequence>
<reference key="1">
    <citation type="journal article" date="2001" name="Nature">
        <title>Complete genome sequence of Salmonella enterica serovar Typhimurium LT2.</title>
        <authorList>
            <person name="McClelland M."/>
            <person name="Sanderson K.E."/>
            <person name="Spieth J."/>
            <person name="Clifton S.W."/>
            <person name="Latreille P."/>
            <person name="Courtney L."/>
            <person name="Porwollik S."/>
            <person name="Ali J."/>
            <person name="Dante M."/>
            <person name="Du F."/>
            <person name="Hou S."/>
            <person name="Layman D."/>
            <person name="Leonard S."/>
            <person name="Nguyen C."/>
            <person name="Scott K."/>
            <person name="Holmes A."/>
            <person name="Grewal N."/>
            <person name="Mulvaney E."/>
            <person name="Ryan E."/>
            <person name="Sun H."/>
            <person name="Florea L."/>
            <person name="Miller W."/>
            <person name="Stoneking T."/>
            <person name="Nhan M."/>
            <person name="Waterston R."/>
            <person name="Wilson R.K."/>
        </authorList>
    </citation>
    <scope>NUCLEOTIDE SEQUENCE [LARGE SCALE GENOMIC DNA]</scope>
    <source>
        <strain>LT2 / SGSC1412 / ATCC 700720</strain>
    </source>
</reference>
<keyword id="KW-0378">Hydrolase</keyword>
<keyword id="KW-0574">Periplasm</keyword>
<keyword id="KW-0659">Purine metabolism</keyword>
<keyword id="KW-1185">Reference proteome</keyword>
<keyword id="KW-0732">Signal</keyword>
<feature type="signal peptide" evidence="2">
    <location>
        <begin position="1"/>
        <end position="20"/>
    </location>
</feature>
<feature type="chain" id="PRO_0000035775" description="5-hydroxyisourate hydrolase">
    <location>
        <begin position="21"/>
        <end position="136"/>
    </location>
</feature>
<feature type="binding site" evidence="1">
    <location>
        <position position="31"/>
    </location>
    <ligand>
        <name>substrate</name>
    </ligand>
</feature>
<feature type="binding site" evidence="1">
    <location>
        <position position="69"/>
    </location>
    <ligand>
        <name>substrate</name>
    </ligand>
</feature>
<feature type="binding site" evidence="1">
    <location>
        <position position="133"/>
    </location>
    <ligand>
        <name>substrate</name>
    </ligand>
</feature>
<name>HIUH_SALTY</name>
<organism>
    <name type="scientific">Salmonella typhimurium (strain LT2 / SGSC1412 / ATCC 700720)</name>
    <dbReference type="NCBI Taxonomy" id="99287"/>
    <lineage>
        <taxon>Bacteria</taxon>
        <taxon>Pseudomonadati</taxon>
        <taxon>Pseudomonadota</taxon>
        <taxon>Gammaproteobacteria</taxon>
        <taxon>Enterobacterales</taxon>
        <taxon>Enterobacteriaceae</taxon>
        <taxon>Salmonella</taxon>
    </lineage>
</organism>
<comment type="function">
    <text evidence="1">Catalyzes the hydrolysis of 5-hydroxyisourate (HIU) to 2-oxo-4-hydroxy-4-carboxy-5-ureidoimidazoline (OHCU).</text>
</comment>
<comment type="catalytic activity">
    <reaction>
        <text>5-hydroxyisourate + H2O = 5-hydroxy-2-oxo-4-ureido-2,5-dihydro-1H-imidazole-5-carboxylate + H(+)</text>
        <dbReference type="Rhea" id="RHEA:23736"/>
        <dbReference type="ChEBI" id="CHEBI:15377"/>
        <dbReference type="ChEBI" id="CHEBI:15378"/>
        <dbReference type="ChEBI" id="CHEBI:18072"/>
        <dbReference type="ChEBI" id="CHEBI:58639"/>
        <dbReference type="EC" id="3.5.2.17"/>
    </reaction>
</comment>
<comment type="subunit">
    <text evidence="1">Homotetramer.</text>
</comment>
<comment type="subcellular location">
    <subcellularLocation>
        <location evidence="1">Periplasm</location>
    </subcellularLocation>
</comment>
<comment type="miscellaneous">
    <text>HIU hydrolysis also occurs spontaneously, but more slowly.</text>
</comment>
<comment type="similarity">
    <text evidence="3">Belongs to the transthyretin family. 5-hydroxyisourate hydrolase subfamily.</text>
</comment>
<evidence type="ECO:0000250" key="1"/>
<evidence type="ECO:0000255" key="2"/>
<evidence type="ECO:0000305" key="3"/>
<protein>
    <recommendedName>
        <fullName>5-hydroxyisourate hydrolase</fullName>
        <shortName>HIU hydrolase</shortName>
        <shortName>HIUHase</shortName>
        <ecNumber>3.5.2.17</ecNumber>
    </recommendedName>
    <alternativeName>
        <fullName>Transthyretin-like protein</fullName>
        <shortName>TLP</shortName>
    </alternativeName>
</protein>
<dbReference type="EC" id="3.5.2.17"/>
<dbReference type="EMBL" id="AE006468">
    <property type="protein sequence ID" value="AAL20029.1"/>
    <property type="molecule type" value="Genomic_DNA"/>
</dbReference>
<dbReference type="RefSeq" id="NP_460070.1">
    <property type="nucleotide sequence ID" value="NC_003197.2"/>
</dbReference>
<dbReference type="RefSeq" id="WP_000833188.1">
    <property type="nucleotide sequence ID" value="NC_003197.2"/>
</dbReference>
<dbReference type="SMR" id="Q8ZQ52"/>
<dbReference type="STRING" id="99287.STM1097"/>
<dbReference type="PaxDb" id="99287-STM1097"/>
<dbReference type="GeneID" id="1252615"/>
<dbReference type="KEGG" id="stm:STM1097"/>
<dbReference type="PATRIC" id="fig|99287.12.peg.1161"/>
<dbReference type="HOGENOM" id="CLU_115536_3_0_6"/>
<dbReference type="OMA" id="CSENQNY"/>
<dbReference type="PhylomeDB" id="Q8ZQ52"/>
<dbReference type="BioCyc" id="SENT99287:STM1097-MONOMER"/>
<dbReference type="PHI-base" id="PHI:2651"/>
<dbReference type="Proteomes" id="UP000001014">
    <property type="component" value="Chromosome"/>
</dbReference>
<dbReference type="GO" id="GO:0042597">
    <property type="term" value="C:periplasmic space"/>
    <property type="evidence" value="ECO:0007669"/>
    <property type="project" value="UniProtKB-SubCell"/>
</dbReference>
<dbReference type="GO" id="GO:0033971">
    <property type="term" value="F:hydroxyisourate hydrolase activity"/>
    <property type="evidence" value="ECO:0007669"/>
    <property type="project" value="UniProtKB-EC"/>
</dbReference>
<dbReference type="GO" id="GO:0006144">
    <property type="term" value="P:purine nucleobase metabolic process"/>
    <property type="evidence" value="ECO:0000318"/>
    <property type="project" value="GO_Central"/>
</dbReference>
<dbReference type="CDD" id="cd05822">
    <property type="entry name" value="TLP_HIUase"/>
    <property type="match status" value="1"/>
</dbReference>
<dbReference type="FunFam" id="2.60.40.180:FF:000001">
    <property type="entry name" value="5-hydroxyisourate hydrolase"/>
    <property type="match status" value="1"/>
</dbReference>
<dbReference type="Gene3D" id="2.60.40.180">
    <property type="entry name" value="Transthyretin/hydroxyisourate hydrolase domain"/>
    <property type="match status" value="1"/>
</dbReference>
<dbReference type="InterPro" id="IPR014306">
    <property type="entry name" value="Hydroxyisourate_hydrolase"/>
</dbReference>
<dbReference type="InterPro" id="IPR023418">
    <property type="entry name" value="Thyroxine_BS"/>
</dbReference>
<dbReference type="InterPro" id="IPR000895">
    <property type="entry name" value="Transthyretin/HIU_hydrolase"/>
</dbReference>
<dbReference type="InterPro" id="IPR023416">
    <property type="entry name" value="Transthyretin/HIU_hydrolase_d"/>
</dbReference>
<dbReference type="InterPro" id="IPR036817">
    <property type="entry name" value="Transthyretin/HIU_hydrolase_sf"/>
</dbReference>
<dbReference type="InterPro" id="IPR023419">
    <property type="entry name" value="Transthyretin_CS"/>
</dbReference>
<dbReference type="NCBIfam" id="TIGR02962">
    <property type="entry name" value="hdxy_isourate"/>
    <property type="match status" value="1"/>
</dbReference>
<dbReference type="NCBIfam" id="NF011610">
    <property type="entry name" value="PRK15036.1"/>
    <property type="match status" value="1"/>
</dbReference>
<dbReference type="PANTHER" id="PTHR10395:SF7">
    <property type="entry name" value="5-HYDROXYISOURATE HYDROLASE"/>
    <property type="match status" value="1"/>
</dbReference>
<dbReference type="PANTHER" id="PTHR10395">
    <property type="entry name" value="URICASE AND TRANSTHYRETIN-RELATED"/>
    <property type="match status" value="1"/>
</dbReference>
<dbReference type="Pfam" id="PF00576">
    <property type="entry name" value="Transthyretin"/>
    <property type="match status" value="1"/>
</dbReference>
<dbReference type="PRINTS" id="PR00189">
    <property type="entry name" value="TRNSTHYRETIN"/>
</dbReference>
<dbReference type="SMART" id="SM00095">
    <property type="entry name" value="TR_THY"/>
    <property type="match status" value="1"/>
</dbReference>
<dbReference type="SUPFAM" id="SSF49472">
    <property type="entry name" value="Transthyretin (synonym: prealbumin)"/>
    <property type="match status" value="1"/>
</dbReference>
<dbReference type="PROSITE" id="PS00768">
    <property type="entry name" value="TRANSTHYRETIN_1"/>
    <property type="match status" value="1"/>
</dbReference>
<dbReference type="PROSITE" id="PS00769">
    <property type="entry name" value="TRANSTHYRETIN_2"/>
    <property type="match status" value="1"/>
</dbReference>
<proteinExistence type="inferred from homology"/>